<proteinExistence type="inferred from homology"/>
<gene>
    <name type="primary">mt-cyb</name>
    <name type="synonym">cob</name>
    <name type="synonym">cytb</name>
    <name type="synonym">mtcyb</name>
</gene>
<geneLocation type="mitochondrion"/>
<accession>Q94T68</accession>
<sequence>MASLRKIHPLMKITNDMVIDLPAPSNISVWWNFGSLLGLCLFSQILTGLFLAMHYTSDISTAFSSVVHTCRDVNYGWFIRSLHANGASFFFICIYLHIARGLYYGSYLYKETWTIGVVLLGLVMATAFVGYVLPWGQMSFWGATVITNLLSAIPYVGGTLVQWIWGGFSVDNATLTRFFTFHFLLPFIIAAATLVHLLFLHETGSNNPTGLNSDADKVSFHPYFSYKDLLGFLALLSALTSLALFSPNLLGDPDNFIPANPLVTPPHIKPEWYFLFAYAILRSIPNKLGGVLALLFSILVLVLVPILHTSKQRGLMFRPLTQTLFWTLVADMLILTWIGGMPVEYPFVIIGQVASTLYFLLFLVLAPTAGWLENKSLKWL</sequence>
<dbReference type="EMBL" id="AP002924">
    <property type="protein sequence ID" value="BAB70104.1"/>
    <property type="molecule type" value="Genomic_DNA"/>
</dbReference>
<dbReference type="RefSeq" id="NP_443306.1">
    <property type="nucleotide sequence ID" value="NC_003165.1"/>
</dbReference>
<dbReference type="SMR" id="Q94T68"/>
<dbReference type="GeneID" id="804033"/>
<dbReference type="CTD" id="4519"/>
<dbReference type="GO" id="GO:0005743">
    <property type="term" value="C:mitochondrial inner membrane"/>
    <property type="evidence" value="ECO:0007669"/>
    <property type="project" value="UniProtKB-SubCell"/>
</dbReference>
<dbReference type="GO" id="GO:0045275">
    <property type="term" value="C:respiratory chain complex III"/>
    <property type="evidence" value="ECO:0007669"/>
    <property type="project" value="InterPro"/>
</dbReference>
<dbReference type="GO" id="GO:0046872">
    <property type="term" value="F:metal ion binding"/>
    <property type="evidence" value="ECO:0007669"/>
    <property type="project" value="UniProtKB-KW"/>
</dbReference>
<dbReference type="GO" id="GO:0008121">
    <property type="term" value="F:ubiquinol-cytochrome-c reductase activity"/>
    <property type="evidence" value="ECO:0007669"/>
    <property type="project" value="InterPro"/>
</dbReference>
<dbReference type="GO" id="GO:0006122">
    <property type="term" value="P:mitochondrial electron transport, ubiquinol to cytochrome c"/>
    <property type="evidence" value="ECO:0007669"/>
    <property type="project" value="TreeGrafter"/>
</dbReference>
<dbReference type="CDD" id="cd00290">
    <property type="entry name" value="cytochrome_b_C"/>
    <property type="match status" value="1"/>
</dbReference>
<dbReference type="CDD" id="cd00284">
    <property type="entry name" value="Cytochrome_b_N"/>
    <property type="match status" value="1"/>
</dbReference>
<dbReference type="FunFam" id="1.20.810.10:FF:000002">
    <property type="entry name" value="Cytochrome b"/>
    <property type="match status" value="1"/>
</dbReference>
<dbReference type="Gene3D" id="1.20.810.10">
    <property type="entry name" value="Cytochrome Bc1 Complex, Chain C"/>
    <property type="match status" value="1"/>
</dbReference>
<dbReference type="InterPro" id="IPR005798">
    <property type="entry name" value="Cyt_b/b6_C"/>
</dbReference>
<dbReference type="InterPro" id="IPR036150">
    <property type="entry name" value="Cyt_b/b6_C_sf"/>
</dbReference>
<dbReference type="InterPro" id="IPR005797">
    <property type="entry name" value="Cyt_b/b6_N"/>
</dbReference>
<dbReference type="InterPro" id="IPR027387">
    <property type="entry name" value="Cytb/b6-like_sf"/>
</dbReference>
<dbReference type="InterPro" id="IPR030689">
    <property type="entry name" value="Cytochrome_b"/>
</dbReference>
<dbReference type="InterPro" id="IPR048260">
    <property type="entry name" value="Cytochrome_b_C_euk/bac"/>
</dbReference>
<dbReference type="InterPro" id="IPR048259">
    <property type="entry name" value="Cytochrome_b_N_euk/bac"/>
</dbReference>
<dbReference type="InterPro" id="IPR016174">
    <property type="entry name" value="Di-haem_cyt_TM"/>
</dbReference>
<dbReference type="PANTHER" id="PTHR19271">
    <property type="entry name" value="CYTOCHROME B"/>
    <property type="match status" value="1"/>
</dbReference>
<dbReference type="PANTHER" id="PTHR19271:SF16">
    <property type="entry name" value="CYTOCHROME B"/>
    <property type="match status" value="1"/>
</dbReference>
<dbReference type="Pfam" id="PF00032">
    <property type="entry name" value="Cytochrom_B_C"/>
    <property type="match status" value="1"/>
</dbReference>
<dbReference type="Pfam" id="PF00033">
    <property type="entry name" value="Cytochrome_B"/>
    <property type="match status" value="1"/>
</dbReference>
<dbReference type="PIRSF" id="PIRSF038885">
    <property type="entry name" value="COB"/>
    <property type="match status" value="1"/>
</dbReference>
<dbReference type="SUPFAM" id="SSF81648">
    <property type="entry name" value="a domain/subunit of cytochrome bc1 complex (Ubiquinol-cytochrome c reductase)"/>
    <property type="match status" value="1"/>
</dbReference>
<dbReference type="SUPFAM" id="SSF81342">
    <property type="entry name" value="Transmembrane di-heme cytochromes"/>
    <property type="match status" value="1"/>
</dbReference>
<dbReference type="PROSITE" id="PS51003">
    <property type="entry name" value="CYTB_CTER"/>
    <property type="match status" value="1"/>
</dbReference>
<dbReference type="PROSITE" id="PS51002">
    <property type="entry name" value="CYTB_NTER"/>
    <property type="match status" value="1"/>
</dbReference>
<evidence type="ECO:0000250" key="1"/>
<evidence type="ECO:0000250" key="2">
    <source>
        <dbReference type="UniProtKB" id="P00157"/>
    </source>
</evidence>
<evidence type="ECO:0000255" key="3">
    <source>
        <dbReference type="PROSITE-ProRule" id="PRU00967"/>
    </source>
</evidence>
<evidence type="ECO:0000255" key="4">
    <source>
        <dbReference type="PROSITE-ProRule" id="PRU00968"/>
    </source>
</evidence>
<organism>
    <name type="scientific">Lampris guttatus</name>
    <name type="common">Opah</name>
    <name type="synonym">Zeus guttatus</name>
    <dbReference type="NCBI Taxonomy" id="81370"/>
    <lineage>
        <taxon>Eukaryota</taxon>
        <taxon>Metazoa</taxon>
        <taxon>Chordata</taxon>
        <taxon>Craniata</taxon>
        <taxon>Vertebrata</taxon>
        <taxon>Euteleostomi</taxon>
        <taxon>Actinopterygii</taxon>
        <taxon>Neopterygii</taxon>
        <taxon>Teleostei</taxon>
        <taxon>Neoteleostei</taxon>
        <taxon>Acanthomorphata</taxon>
        <taxon>Lampriformes</taxon>
        <taxon>Lampridae</taxon>
        <taxon>Lampris</taxon>
    </lineage>
</organism>
<keyword id="KW-0249">Electron transport</keyword>
<keyword id="KW-0349">Heme</keyword>
<keyword id="KW-0408">Iron</keyword>
<keyword id="KW-0472">Membrane</keyword>
<keyword id="KW-0479">Metal-binding</keyword>
<keyword id="KW-0496">Mitochondrion</keyword>
<keyword id="KW-0999">Mitochondrion inner membrane</keyword>
<keyword id="KW-0679">Respiratory chain</keyword>
<keyword id="KW-0812">Transmembrane</keyword>
<keyword id="KW-1133">Transmembrane helix</keyword>
<keyword id="KW-0813">Transport</keyword>
<keyword id="KW-0830">Ubiquinone</keyword>
<protein>
    <recommendedName>
        <fullName>Cytochrome b</fullName>
    </recommendedName>
    <alternativeName>
        <fullName>Complex III subunit 3</fullName>
    </alternativeName>
    <alternativeName>
        <fullName>Complex III subunit III</fullName>
    </alternativeName>
    <alternativeName>
        <fullName>Cytochrome b-c1 complex subunit 3</fullName>
    </alternativeName>
    <alternativeName>
        <fullName>Ubiquinol-cytochrome-c reductase complex cytochrome b subunit</fullName>
    </alternativeName>
</protein>
<name>CYB_LAMGT</name>
<comment type="function">
    <text evidence="2">Component of the ubiquinol-cytochrome c reductase complex (complex III or cytochrome b-c1 complex) that is part of the mitochondrial respiratory chain. The b-c1 complex mediates electron transfer from ubiquinol to cytochrome c. Contributes to the generation of a proton gradient across the mitochondrial membrane that is then used for ATP synthesis.</text>
</comment>
<comment type="cofactor">
    <cofactor evidence="2">
        <name>heme b</name>
        <dbReference type="ChEBI" id="CHEBI:60344"/>
    </cofactor>
    <text evidence="2">Binds 2 heme b groups non-covalently.</text>
</comment>
<comment type="subunit">
    <text evidence="2">The cytochrome bc1 complex contains 3 respiratory subunits (MT-CYB, CYC1 and UQCRFS1), 2 core proteins (UQCRC1 and UQCRC2) and probably 6 low-molecular weight proteins.</text>
</comment>
<comment type="subcellular location">
    <subcellularLocation>
        <location evidence="2">Mitochondrion inner membrane</location>
        <topology evidence="2">Multi-pass membrane protein</topology>
    </subcellularLocation>
</comment>
<comment type="miscellaneous">
    <text evidence="1">Heme 1 (or BL or b562) is low-potential and absorbs at about 562 nm, and heme 2 (or BH or b566) is high-potential and absorbs at about 566 nm.</text>
</comment>
<comment type="similarity">
    <text evidence="3 4">Belongs to the cytochrome b family.</text>
</comment>
<comment type="caution">
    <text evidence="2">The full-length protein contains only eight transmembrane helices, not nine as predicted by bioinformatics tools.</text>
</comment>
<feature type="chain" id="PRO_0000061086" description="Cytochrome b">
    <location>
        <begin position="1"/>
        <end position="380"/>
    </location>
</feature>
<feature type="transmembrane region" description="Helical" evidence="2">
    <location>
        <begin position="33"/>
        <end position="53"/>
    </location>
</feature>
<feature type="transmembrane region" description="Helical" evidence="2">
    <location>
        <begin position="77"/>
        <end position="98"/>
    </location>
</feature>
<feature type="transmembrane region" description="Helical" evidence="2">
    <location>
        <begin position="113"/>
        <end position="133"/>
    </location>
</feature>
<feature type="transmembrane region" description="Helical" evidence="2">
    <location>
        <begin position="178"/>
        <end position="198"/>
    </location>
</feature>
<feature type="transmembrane region" description="Helical" evidence="2">
    <location>
        <begin position="226"/>
        <end position="246"/>
    </location>
</feature>
<feature type="transmembrane region" description="Helical" evidence="2">
    <location>
        <begin position="288"/>
        <end position="308"/>
    </location>
</feature>
<feature type="transmembrane region" description="Helical" evidence="2">
    <location>
        <begin position="320"/>
        <end position="340"/>
    </location>
</feature>
<feature type="transmembrane region" description="Helical" evidence="2">
    <location>
        <begin position="347"/>
        <end position="367"/>
    </location>
</feature>
<feature type="binding site" description="axial binding residue" evidence="2">
    <location>
        <position position="83"/>
    </location>
    <ligand>
        <name>heme b</name>
        <dbReference type="ChEBI" id="CHEBI:60344"/>
        <label>b562</label>
    </ligand>
    <ligandPart>
        <name>Fe</name>
        <dbReference type="ChEBI" id="CHEBI:18248"/>
    </ligandPart>
</feature>
<feature type="binding site" description="axial binding residue" evidence="2">
    <location>
        <position position="97"/>
    </location>
    <ligand>
        <name>heme b</name>
        <dbReference type="ChEBI" id="CHEBI:60344"/>
        <label>b566</label>
    </ligand>
    <ligandPart>
        <name>Fe</name>
        <dbReference type="ChEBI" id="CHEBI:18248"/>
    </ligandPart>
</feature>
<feature type="binding site" description="axial binding residue" evidence="2">
    <location>
        <position position="182"/>
    </location>
    <ligand>
        <name>heme b</name>
        <dbReference type="ChEBI" id="CHEBI:60344"/>
        <label>b562</label>
    </ligand>
    <ligandPart>
        <name>Fe</name>
        <dbReference type="ChEBI" id="CHEBI:18248"/>
    </ligandPart>
</feature>
<feature type="binding site" description="axial binding residue" evidence="2">
    <location>
        <position position="196"/>
    </location>
    <ligand>
        <name>heme b</name>
        <dbReference type="ChEBI" id="CHEBI:60344"/>
        <label>b566</label>
    </ligand>
    <ligandPart>
        <name>Fe</name>
        <dbReference type="ChEBI" id="CHEBI:18248"/>
    </ligandPart>
</feature>
<feature type="binding site" evidence="2">
    <location>
        <position position="201"/>
    </location>
    <ligand>
        <name>a ubiquinone</name>
        <dbReference type="ChEBI" id="CHEBI:16389"/>
    </ligand>
</feature>
<reference key="1">
    <citation type="journal article" date="2001" name="Mol. Biol. Evol.">
        <title>Mitogenomic exploration of higher teleostean phylogenies: a case study for moderate-scale evolutionary genomics with 38 newly determined complete mitochondrial DNA sequences.</title>
        <authorList>
            <person name="Miya M."/>
            <person name="Kawaguchi A."/>
            <person name="Nishida M."/>
        </authorList>
    </citation>
    <scope>NUCLEOTIDE SEQUENCE [GENOMIC DNA]</scope>
</reference>